<gene>
    <name evidence="1" type="primary">atpE</name>
    <name type="ordered locus">YE4211</name>
</gene>
<protein>
    <recommendedName>
        <fullName evidence="1">ATP synthase subunit c</fullName>
    </recommendedName>
    <alternativeName>
        <fullName evidence="1">ATP synthase F(0) sector subunit c</fullName>
    </alternativeName>
    <alternativeName>
        <fullName evidence="1">F-type ATPase subunit c</fullName>
        <shortName evidence="1">F-ATPase subunit c</shortName>
    </alternativeName>
    <alternativeName>
        <fullName evidence="1">Lipid-binding protein</fullName>
    </alternativeName>
</protein>
<sequence>MENLNMDLLYMAAAIMMGLAAIGAAIGIGILGGKFLEGAARQPDLIPLLRTQFFIVMGLVDAIPMIAVGLGLYVMFAVA</sequence>
<comment type="function">
    <text evidence="1">F(1)F(0) ATP synthase produces ATP from ADP in the presence of a proton or sodium gradient. F-type ATPases consist of two structural domains, F(1) containing the extramembraneous catalytic core and F(0) containing the membrane proton channel, linked together by a central stalk and a peripheral stalk. During catalysis, ATP synthesis in the catalytic domain of F(1) is coupled via a rotary mechanism of the central stalk subunits to proton translocation.</text>
</comment>
<comment type="function">
    <text evidence="1">Key component of the F(0) channel; it plays a direct role in translocation across the membrane. A homomeric c-ring of between 10-14 subunits forms the central stalk rotor element with the F(1) delta and epsilon subunits.</text>
</comment>
<comment type="subunit">
    <text evidence="1">F-type ATPases have 2 components, F(1) - the catalytic core - and F(0) - the membrane proton channel. F(1) has five subunits: alpha(3), beta(3), gamma(1), delta(1), epsilon(1). F(0) has three main subunits: a(1), b(2) and c(10-14). The alpha and beta chains form an alternating ring which encloses part of the gamma chain. F(1) is attached to F(0) by a central stalk formed by the gamma and epsilon chains, while a peripheral stalk is formed by the delta and b chains.</text>
</comment>
<comment type="subcellular location">
    <subcellularLocation>
        <location evidence="1">Cell inner membrane</location>
        <topology evidence="1">Multi-pass membrane protein</topology>
    </subcellularLocation>
</comment>
<comment type="similarity">
    <text evidence="1">Belongs to the ATPase C chain family.</text>
</comment>
<name>ATPL_YERE8</name>
<proteinExistence type="inferred from homology"/>
<accession>A1JTD2</accession>
<keyword id="KW-0066">ATP synthesis</keyword>
<keyword id="KW-0997">Cell inner membrane</keyword>
<keyword id="KW-1003">Cell membrane</keyword>
<keyword id="KW-0138">CF(0)</keyword>
<keyword id="KW-0375">Hydrogen ion transport</keyword>
<keyword id="KW-0406">Ion transport</keyword>
<keyword id="KW-0446">Lipid-binding</keyword>
<keyword id="KW-0472">Membrane</keyword>
<keyword id="KW-0812">Transmembrane</keyword>
<keyword id="KW-1133">Transmembrane helix</keyword>
<keyword id="KW-0813">Transport</keyword>
<dbReference type="EMBL" id="AM286415">
    <property type="protein sequence ID" value="CAL14225.1"/>
    <property type="molecule type" value="Genomic_DNA"/>
</dbReference>
<dbReference type="RefSeq" id="WP_004393045.1">
    <property type="nucleotide sequence ID" value="NC_008800.1"/>
</dbReference>
<dbReference type="RefSeq" id="YP_001008343.1">
    <property type="nucleotide sequence ID" value="NC_008800.1"/>
</dbReference>
<dbReference type="BMRB" id="A1JTD2"/>
<dbReference type="SMR" id="A1JTD2"/>
<dbReference type="GeneID" id="97458363"/>
<dbReference type="KEGG" id="yen:YE4211"/>
<dbReference type="PATRIC" id="fig|393305.7.peg.4477"/>
<dbReference type="eggNOG" id="ENOG5032S3K">
    <property type="taxonomic scope" value="Bacteria"/>
</dbReference>
<dbReference type="HOGENOM" id="CLU_148047_1_0_6"/>
<dbReference type="OrthoDB" id="9811659at2"/>
<dbReference type="PRO" id="PR:A1JTD2"/>
<dbReference type="Proteomes" id="UP000000642">
    <property type="component" value="Chromosome"/>
</dbReference>
<dbReference type="GO" id="GO:0005886">
    <property type="term" value="C:plasma membrane"/>
    <property type="evidence" value="ECO:0007669"/>
    <property type="project" value="UniProtKB-SubCell"/>
</dbReference>
<dbReference type="GO" id="GO:0045259">
    <property type="term" value="C:proton-transporting ATP synthase complex"/>
    <property type="evidence" value="ECO:0007669"/>
    <property type="project" value="UniProtKB-KW"/>
</dbReference>
<dbReference type="GO" id="GO:0033177">
    <property type="term" value="C:proton-transporting two-sector ATPase complex, proton-transporting domain"/>
    <property type="evidence" value="ECO:0007669"/>
    <property type="project" value="InterPro"/>
</dbReference>
<dbReference type="GO" id="GO:0008289">
    <property type="term" value="F:lipid binding"/>
    <property type="evidence" value="ECO:0007669"/>
    <property type="project" value="UniProtKB-KW"/>
</dbReference>
<dbReference type="GO" id="GO:0046933">
    <property type="term" value="F:proton-transporting ATP synthase activity, rotational mechanism"/>
    <property type="evidence" value="ECO:0007669"/>
    <property type="project" value="UniProtKB-UniRule"/>
</dbReference>
<dbReference type="CDD" id="cd18185">
    <property type="entry name" value="ATP-synt_Fo_c_ATPE"/>
    <property type="match status" value="1"/>
</dbReference>
<dbReference type="FunFam" id="1.20.20.10:FF:000002">
    <property type="entry name" value="ATP synthase subunit c"/>
    <property type="match status" value="1"/>
</dbReference>
<dbReference type="Gene3D" id="1.20.20.10">
    <property type="entry name" value="F1F0 ATP synthase subunit C"/>
    <property type="match status" value="1"/>
</dbReference>
<dbReference type="HAMAP" id="MF_01396">
    <property type="entry name" value="ATP_synth_c_bact"/>
    <property type="match status" value="1"/>
</dbReference>
<dbReference type="InterPro" id="IPR005953">
    <property type="entry name" value="ATP_synth_csu_bac/chlpt"/>
</dbReference>
<dbReference type="InterPro" id="IPR000454">
    <property type="entry name" value="ATP_synth_F0_csu"/>
</dbReference>
<dbReference type="InterPro" id="IPR020537">
    <property type="entry name" value="ATP_synth_F0_csu_DDCD_BS"/>
</dbReference>
<dbReference type="InterPro" id="IPR038662">
    <property type="entry name" value="ATP_synth_F0_csu_sf"/>
</dbReference>
<dbReference type="InterPro" id="IPR002379">
    <property type="entry name" value="ATPase_proteolipid_c-like_dom"/>
</dbReference>
<dbReference type="InterPro" id="IPR035921">
    <property type="entry name" value="F/V-ATP_Csub_sf"/>
</dbReference>
<dbReference type="NCBIfam" id="TIGR01260">
    <property type="entry name" value="ATP_synt_c"/>
    <property type="match status" value="1"/>
</dbReference>
<dbReference type="NCBIfam" id="NF005363">
    <property type="entry name" value="PRK06876.1"/>
    <property type="match status" value="1"/>
</dbReference>
<dbReference type="Pfam" id="PF00137">
    <property type="entry name" value="ATP-synt_C"/>
    <property type="match status" value="1"/>
</dbReference>
<dbReference type="PRINTS" id="PR00124">
    <property type="entry name" value="ATPASEC"/>
</dbReference>
<dbReference type="SUPFAM" id="SSF81333">
    <property type="entry name" value="F1F0 ATP synthase subunit C"/>
    <property type="match status" value="1"/>
</dbReference>
<dbReference type="PROSITE" id="PS00605">
    <property type="entry name" value="ATPASE_C"/>
    <property type="match status" value="1"/>
</dbReference>
<reference key="1">
    <citation type="journal article" date="2006" name="PLoS Genet.">
        <title>The complete genome sequence and comparative genome analysis of the high pathogenicity Yersinia enterocolitica strain 8081.</title>
        <authorList>
            <person name="Thomson N.R."/>
            <person name="Howard S."/>
            <person name="Wren B.W."/>
            <person name="Holden M.T.G."/>
            <person name="Crossman L."/>
            <person name="Challis G.L."/>
            <person name="Churcher C."/>
            <person name="Mungall K."/>
            <person name="Brooks K."/>
            <person name="Chillingworth T."/>
            <person name="Feltwell T."/>
            <person name="Abdellah Z."/>
            <person name="Hauser H."/>
            <person name="Jagels K."/>
            <person name="Maddison M."/>
            <person name="Moule S."/>
            <person name="Sanders M."/>
            <person name="Whitehead S."/>
            <person name="Quail M.A."/>
            <person name="Dougan G."/>
            <person name="Parkhill J."/>
            <person name="Prentice M.B."/>
        </authorList>
    </citation>
    <scope>NUCLEOTIDE SEQUENCE [LARGE SCALE GENOMIC DNA]</scope>
    <source>
        <strain>NCTC 13174 / 8081</strain>
    </source>
</reference>
<feature type="chain" id="PRO_1000184538" description="ATP synthase subunit c">
    <location>
        <begin position="1"/>
        <end position="79"/>
    </location>
</feature>
<feature type="transmembrane region" description="Helical" evidence="1">
    <location>
        <begin position="11"/>
        <end position="31"/>
    </location>
</feature>
<feature type="transmembrane region" description="Helical" evidence="1">
    <location>
        <begin position="53"/>
        <end position="73"/>
    </location>
</feature>
<feature type="site" description="Reversibly protonated during proton transport" evidence="1">
    <location>
        <position position="61"/>
    </location>
</feature>
<evidence type="ECO:0000255" key="1">
    <source>
        <dbReference type="HAMAP-Rule" id="MF_01396"/>
    </source>
</evidence>
<organism>
    <name type="scientific">Yersinia enterocolitica serotype O:8 / biotype 1B (strain NCTC 13174 / 8081)</name>
    <dbReference type="NCBI Taxonomy" id="393305"/>
    <lineage>
        <taxon>Bacteria</taxon>
        <taxon>Pseudomonadati</taxon>
        <taxon>Pseudomonadota</taxon>
        <taxon>Gammaproteobacteria</taxon>
        <taxon>Enterobacterales</taxon>
        <taxon>Yersiniaceae</taxon>
        <taxon>Yersinia</taxon>
    </lineage>
</organism>